<protein>
    <recommendedName>
        <fullName evidence="1">Chaperone protein TorD</fullName>
    </recommendedName>
</protein>
<comment type="function">
    <text evidence="1">Involved in the biogenesis of TorA. Acts on TorA before the insertion of the molybdenum cofactor and, as a result, probably favors a conformation of the apoenzyme that is competent for acquiring the cofactor.</text>
</comment>
<comment type="subcellular location">
    <subcellularLocation>
        <location evidence="1">Cytoplasm</location>
    </subcellularLocation>
</comment>
<comment type="similarity">
    <text evidence="1">Belongs to the TorD/DmsD family. TorD subfamily.</text>
</comment>
<reference key="1">
    <citation type="journal article" date="2009" name="J. Bacteriol.">
        <title>Complete genome sequence and comparative genome analysis of enteropathogenic Escherichia coli O127:H6 strain E2348/69.</title>
        <authorList>
            <person name="Iguchi A."/>
            <person name="Thomson N.R."/>
            <person name="Ogura Y."/>
            <person name="Saunders D."/>
            <person name="Ooka T."/>
            <person name="Henderson I.R."/>
            <person name="Harris D."/>
            <person name="Asadulghani M."/>
            <person name="Kurokawa K."/>
            <person name="Dean P."/>
            <person name="Kenny B."/>
            <person name="Quail M.A."/>
            <person name="Thurston S."/>
            <person name="Dougan G."/>
            <person name="Hayashi T."/>
            <person name="Parkhill J."/>
            <person name="Frankel G."/>
        </authorList>
    </citation>
    <scope>NUCLEOTIDE SEQUENCE [LARGE SCALE GENOMIC DNA]</scope>
    <source>
        <strain>E2348/69 / EPEC</strain>
    </source>
</reference>
<name>TORD_ECO27</name>
<organism>
    <name type="scientific">Escherichia coli O127:H6 (strain E2348/69 / EPEC)</name>
    <dbReference type="NCBI Taxonomy" id="574521"/>
    <lineage>
        <taxon>Bacteria</taxon>
        <taxon>Pseudomonadati</taxon>
        <taxon>Pseudomonadota</taxon>
        <taxon>Gammaproteobacteria</taxon>
        <taxon>Enterobacterales</taxon>
        <taxon>Enterobacteriaceae</taxon>
        <taxon>Escherichia</taxon>
    </lineage>
</organism>
<gene>
    <name evidence="1" type="primary">torD</name>
    <name type="ordered locus">E2348C_1049</name>
</gene>
<accession>B7UNY1</accession>
<proteinExistence type="inferred from homology"/>
<feature type="chain" id="PRO_1000164167" description="Chaperone protein TorD">
    <location>
        <begin position="1"/>
        <end position="199"/>
    </location>
</feature>
<dbReference type="EMBL" id="FM180568">
    <property type="protein sequence ID" value="CAS08597.1"/>
    <property type="molecule type" value="Genomic_DNA"/>
</dbReference>
<dbReference type="RefSeq" id="WP_000209902.1">
    <property type="nucleotide sequence ID" value="NC_011601.1"/>
</dbReference>
<dbReference type="SMR" id="B7UNY1"/>
<dbReference type="KEGG" id="ecg:E2348C_1049"/>
<dbReference type="HOGENOM" id="CLU_077650_4_0_6"/>
<dbReference type="Proteomes" id="UP000008205">
    <property type="component" value="Chromosome"/>
</dbReference>
<dbReference type="GO" id="GO:0005737">
    <property type="term" value="C:cytoplasm"/>
    <property type="evidence" value="ECO:0007669"/>
    <property type="project" value="UniProtKB-SubCell"/>
</dbReference>
<dbReference type="GO" id="GO:0051259">
    <property type="term" value="P:protein complex oligomerization"/>
    <property type="evidence" value="ECO:0007669"/>
    <property type="project" value="InterPro"/>
</dbReference>
<dbReference type="GO" id="GO:0006457">
    <property type="term" value="P:protein folding"/>
    <property type="evidence" value="ECO:0007669"/>
    <property type="project" value="UniProtKB-UniRule"/>
</dbReference>
<dbReference type="FunFam" id="1.20.120.1820:FF:000001">
    <property type="entry name" value="Chaperone protein TorD"/>
    <property type="match status" value="1"/>
</dbReference>
<dbReference type="FunFam" id="1.20.1280.20:FF:000003">
    <property type="entry name" value="Chaperone protein TorD"/>
    <property type="match status" value="1"/>
</dbReference>
<dbReference type="Gene3D" id="1.20.120.1820">
    <property type="match status" value="1"/>
</dbReference>
<dbReference type="Gene3D" id="1.20.1280.20">
    <property type="entry name" value="HscB, C-terminal domain"/>
    <property type="match status" value="1"/>
</dbReference>
<dbReference type="HAMAP" id="MF_01150">
    <property type="entry name" value="TorD"/>
    <property type="match status" value="1"/>
</dbReference>
<dbReference type="InterPro" id="IPR023069">
    <property type="entry name" value="Chaperone_TorD"/>
</dbReference>
<dbReference type="InterPro" id="IPR020945">
    <property type="entry name" value="DMSO/NO3_reduct_chaperone"/>
</dbReference>
<dbReference type="InterPro" id="IPR036386">
    <property type="entry name" value="HscB_C_sf"/>
</dbReference>
<dbReference type="InterPro" id="IPR036411">
    <property type="entry name" value="TorD-like_sf"/>
</dbReference>
<dbReference type="InterPro" id="IPR050289">
    <property type="entry name" value="TorD/DmsD_chaperones"/>
</dbReference>
<dbReference type="NCBIfam" id="NF003442">
    <property type="entry name" value="PRK04976.1"/>
    <property type="match status" value="1"/>
</dbReference>
<dbReference type="PANTHER" id="PTHR34227:SF11">
    <property type="entry name" value="CHAPERONE PROTEIN TORD"/>
    <property type="match status" value="1"/>
</dbReference>
<dbReference type="PANTHER" id="PTHR34227">
    <property type="entry name" value="CHAPERONE PROTEIN YCDY"/>
    <property type="match status" value="1"/>
</dbReference>
<dbReference type="Pfam" id="PF02613">
    <property type="entry name" value="Nitrate_red_del"/>
    <property type="match status" value="1"/>
</dbReference>
<dbReference type="SUPFAM" id="SSF89155">
    <property type="entry name" value="TorD-like"/>
    <property type="match status" value="1"/>
</dbReference>
<keyword id="KW-0143">Chaperone</keyword>
<keyword id="KW-0963">Cytoplasm</keyword>
<keyword id="KW-1185">Reference proteome</keyword>
<evidence type="ECO:0000255" key="1">
    <source>
        <dbReference type="HAMAP-Rule" id="MF_01150"/>
    </source>
</evidence>
<sequence>MTTLTAQQIACVYAWLAQLFSRELDDEQLTQIASAQMAEWFSLLKSEPPLTAAVNGLENSIATLTVRDDARLELAADFCGLFLMTDKQAALPYASANKQDEQEIKRLLVEAGMETSGNFNEPADHLAIYLDLLSHLHFSLGEGTVPARRIDGLRQKTLTALREWLPEFAARCRQYDSFGFYAALSQLLLVLVECDYQKR</sequence>